<feature type="initiator methionine" description="Removed" evidence="3">
    <location>
        <position position="1"/>
    </location>
</feature>
<feature type="chain" id="PRO_0000207457" description="ADP-ribosylation factor-like protein 3">
    <location>
        <begin position="2"/>
        <end position="182"/>
    </location>
</feature>
<feature type="binding site" evidence="7">
    <location>
        <begin position="24"/>
        <end position="31"/>
    </location>
    <ligand>
        <name>GTP</name>
        <dbReference type="ChEBI" id="CHEBI:37565"/>
    </ligand>
</feature>
<feature type="binding site">
    <location>
        <position position="31"/>
    </location>
    <ligand>
        <name>Mg(2+)</name>
        <dbReference type="ChEBI" id="CHEBI:18420"/>
    </ligand>
</feature>
<feature type="binding site" evidence="7">
    <location>
        <position position="48"/>
    </location>
    <ligand>
        <name>GTP</name>
        <dbReference type="ChEBI" id="CHEBI:37565"/>
    </ligand>
</feature>
<feature type="binding site">
    <location>
        <position position="48"/>
    </location>
    <ligand>
        <name>Mg(2+)</name>
        <dbReference type="ChEBI" id="CHEBI:18420"/>
    </ligand>
</feature>
<feature type="binding site" evidence="1">
    <location>
        <begin position="67"/>
        <end position="71"/>
    </location>
    <ligand>
        <name>GTP</name>
        <dbReference type="ChEBI" id="CHEBI:37565"/>
    </ligand>
</feature>
<feature type="binding site" evidence="7">
    <location>
        <position position="70"/>
    </location>
    <ligand>
        <name>GTP</name>
        <dbReference type="ChEBI" id="CHEBI:37565"/>
    </ligand>
</feature>
<feature type="binding site" evidence="7">
    <location>
        <begin position="126"/>
        <end position="129"/>
    </location>
    <ligand>
        <name>GTP</name>
        <dbReference type="ChEBI" id="CHEBI:37565"/>
    </ligand>
</feature>
<feature type="binding site" evidence="7">
    <location>
        <begin position="159"/>
        <end position="161"/>
    </location>
    <ligand>
        <name>GTP</name>
        <dbReference type="ChEBI" id="CHEBI:37565"/>
    </ligand>
</feature>
<feature type="modified residue" description="Phosphoserine" evidence="2">
    <location>
        <position position="5"/>
    </location>
</feature>
<feature type="lipid moiety-binding region" description="N-myristoyl glycine" evidence="3">
    <location>
        <position position="2"/>
    </location>
</feature>
<feature type="mutagenesis site" description="Inhibits interaction with PDE6D." evidence="4">
    <original>T</original>
    <variation>N</variation>
    <location>
        <position position="31"/>
    </location>
</feature>
<feature type="mutagenesis site" description="Does not reduce the interaction with RP2." evidence="7">
    <original>Q</original>
    <variation>L</variation>
    <location>
        <position position="49"/>
    </location>
</feature>
<feature type="mutagenesis site" description="Does not inhibit interaction with PDE6D." evidence="4 7">
    <original>Q</original>
    <variation>L</variation>
    <location>
        <position position="71"/>
    </location>
</feature>
<feature type="mutagenesis site" description="Inhibits RP2-dependent GTP-hydrolysis rate." evidence="4 7">
    <original>Q</original>
    <variation>L</variation>
    <location>
        <position position="71"/>
    </location>
</feature>
<feature type="mutagenesis site" description="Does not reduce the interaction with RP2." evidence="7">
    <original>K</original>
    <variation>Q</variation>
    <location>
        <position position="98"/>
    </location>
</feature>
<feature type="mutagenesis site" description="Reduces the interaction with RP2; when associated with A-168." evidence="7">
    <original>E</original>
    <variation>A</variation>
    <location>
        <position position="164"/>
    </location>
</feature>
<feature type="mutagenesis site" description="Reduces the interaction with RP2; when associated with A-164." evidence="7">
    <original>D</original>
    <variation>A</variation>
    <location>
        <position position="168"/>
    </location>
</feature>
<feature type="helix" evidence="11">
    <location>
        <begin position="6"/>
        <end position="9"/>
    </location>
</feature>
<feature type="strand" evidence="13">
    <location>
        <begin position="11"/>
        <end position="13"/>
    </location>
</feature>
<feature type="helix" evidence="13">
    <location>
        <begin position="14"/>
        <end position="16"/>
    </location>
</feature>
<feature type="strand" evidence="11">
    <location>
        <begin position="18"/>
        <end position="25"/>
    </location>
</feature>
<feature type="helix" evidence="11">
    <location>
        <begin position="30"/>
        <end position="37"/>
    </location>
</feature>
<feature type="strand" evidence="11">
    <location>
        <begin position="43"/>
        <end position="48"/>
    </location>
</feature>
<feature type="strand" evidence="11">
    <location>
        <begin position="51"/>
        <end position="58"/>
    </location>
</feature>
<feature type="strand" evidence="11">
    <location>
        <begin position="61"/>
        <end position="67"/>
    </location>
</feature>
<feature type="helix" evidence="11">
    <location>
        <begin position="72"/>
        <end position="74"/>
    </location>
</feature>
<feature type="helix" evidence="11">
    <location>
        <begin position="75"/>
        <end position="82"/>
    </location>
</feature>
<feature type="strand" evidence="11">
    <location>
        <begin position="86"/>
        <end position="93"/>
    </location>
</feature>
<feature type="helix" evidence="11">
    <location>
        <begin position="97"/>
        <end position="99"/>
    </location>
</feature>
<feature type="helix" evidence="11">
    <location>
        <begin position="100"/>
        <end position="110"/>
    </location>
</feature>
<feature type="helix" evidence="11">
    <location>
        <begin position="114"/>
        <end position="116"/>
    </location>
</feature>
<feature type="strand" evidence="11">
    <location>
        <begin position="121"/>
        <end position="126"/>
    </location>
</feature>
<feature type="strand" evidence="12">
    <location>
        <begin position="130"/>
        <end position="132"/>
    </location>
</feature>
<feature type="helix" evidence="11">
    <location>
        <begin position="136"/>
        <end position="142"/>
    </location>
</feature>
<feature type="helix" evidence="11">
    <location>
        <begin position="145"/>
        <end position="147"/>
    </location>
</feature>
<feature type="strand" evidence="11">
    <location>
        <begin position="153"/>
        <end position="157"/>
    </location>
</feature>
<feature type="turn" evidence="11">
    <location>
        <begin position="160"/>
        <end position="162"/>
    </location>
</feature>
<feature type="helix" evidence="11">
    <location>
        <begin position="166"/>
        <end position="175"/>
    </location>
</feature>
<feature type="turn" evidence="13">
    <location>
        <begin position="176"/>
        <end position="178"/>
    </location>
</feature>
<feature type="helix" evidence="14">
    <location>
        <begin position="179"/>
        <end position="182"/>
    </location>
</feature>
<accession>Q9WUL7</accession>
<gene>
    <name evidence="10" type="primary">Arl3</name>
</gene>
<protein>
    <recommendedName>
        <fullName evidence="9">ADP-ribosylation factor-like protein 3</fullName>
    </recommendedName>
</protein>
<proteinExistence type="evidence at protein level"/>
<reference key="1">
    <citation type="journal article" date="1999" name="FEBS Lett.">
        <title>The delta subunit of rod specific cyclic GMP phosphodiesterase, PDE delta, interacts with the Arf-like protein Arl3 in a GTP specific manner.</title>
        <authorList>
            <person name="Linari M."/>
            <person name="Hanzal-Bayer M."/>
            <person name="Becker J."/>
        </authorList>
    </citation>
    <scope>NUCLEOTIDE SEQUENCE [MRNA]</scope>
    <scope>INTERACTION WITH PDE6D</scope>
    <scope>MUTAGENESIS OF THR-31 AND GLN-71</scope>
</reference>
<reference key="2">
    <citation type="journal article" date="2004" name="Genome Res.">
        <title>The status, quality, and expansion of the NIH full-length cDNA project: the Mammalian Gene Collection (MGC).</title>
        <authorList>
            <consortium name="The MGC Project Team"/>
        </authorList>
    </citation>
    <scope>NUCLEOTIDE SEQUENCE [LARGE SCALE MRNA]</scope>
    <source>
        <tissue>Eye</tissue>
    </source>
</reference>
<reference key="3">
    <citation type="journal article" date="2005" name="J. Mol. Biol.">
        <title>Properties of the interaction of Arf-like protein 2 with PDEdelta.</title>
        <authorList>
            <person name="Hanzal-Bayer M."/>
            <person name="Linari M."/>
            <person name="Wittinghofer A."/>
        </authorList>
    </citation>
    <scope>FUNCTION</scope>
    <scope>INTERACTION WITH PDE6D</scope>
    <scope>GTP/GDP-BINDING</scope>
</reference>
<reference key="4">
    <citation type="journal article" date="2006" name="Am. J. Pathol.">
        <title>ADP-ribosylation factor-like 3 is involved in kidney and photoreceptor development.</title>
        <authorList>
            <person name="Schrick J.J."/>
            <person name="Vogel P."/>
            <person name="Abuin A."/>
            <person name="Hampton B."/>
            <person name="Rice D.S."/>
        </authorList>
    </citation>
    <scope>DISRUPTION PHENOTYPE</scope>
</reference>
<reference key="5">
    <citation type="journal article" date="2010" name="Cell">
        <title>A tissue-specific atlas of mouse protein phosphorylation and expression.</title>
        <authorList>
            <person name="Huttlin E.L."/>
            <person name="Jedrychowski M.P."/>
            <person name="Elias J.E."/>
            <person name="Goswami T."/>
            <person name="Rad R."/>
            <person name="Beausoleil S.A."/>
            <person name="Villen J."/>
            <person name="Haas W."/>
            <person name="Sowa M.E."/>
            <person name="Gygi S.P."/>
        </authorList>
    </citation>
    <scope>IDENTIFICATION BY MASS SPECTROMETRY [LARGE SCALE ANALYSIS]</scope>
    <source>
        <tissue>Brain</tissue>
        <tissue>Brown adipose tissue</tissue>
        <tissue>Heart</tissue>
        <tissue>Kidney</tissue>
        <tissue>Liver</tissue>
        <tissue>Lung</tissue>
        <tissue>Pancreas</tissue>
        <tissue>Spleen</tissue>
        <tissue>Testis</tissue>
    </source>
</reference>
<reference key="6">
    <citation type="journal article" date="2014" name="Nat. Commun.">
        <title>Ciliary membrane proteins traffic through the Golgi via a Rabep1/GGA1/Arl3-dependent mechanism.</title>
        <authorList>
            <person name="Kim H."/>
            <person name="Xu H."/>
            <person name="Yao Q."/>
            <person name="Li W."/>
            <person name="Huang Q."/>
            <person name="Outeda P."/>
            <person name="Cebotaru V."/>
            <person name="Chiaravalli M."/>
            <person name="Boletta A."/>
            <person name="Piontek K."/>
            <person name="Germino G.G."/>
            <person name="Weinman E.J."/>
            <person name="Watnick T."/>
            <person name="Qian F."/>
        </authorList>
    </citation>
    <scope>FUNCTION</scope>
    <scope>INTERACTION WITH GGA1</scope>
</reference>
<reference key="7">
    <citation type="journal article" date="2000" name="Structure">
        <title>Structural and biochemical properties show ARL3-GDP as a distinct GTP binding protein.</title>
        <authorList>
            <person name="Hillig R.C."/>
            <person name="Hanzal-Bayer M."/>
            <person name="Linari M."/>
            <person name="Becker J."/>
            <person name="Wittinghofer A."/>
            <person name="Renault L."/>
        </authorList>
    </citation>
    <scope>X-RAY CRYSTALLOGRAPHY (1.7 ANGSTROMS) IN COMPLEX WITH GDP AND MAGNESIUM IONS</scope>
</reference>
<reference key="8">
    <citation type="journal article" date="2008" name="Nat. Struct. Mol. Biol.">
        <title>The retinitis pigmentosa 2 gene product is a GTPase-activating protein for Arf-like 3.</title>
        <authorList>
            <person name="Veltel S."/>
            <person name="Gasper R."/>
            <person name="Eisenacher E."/>
            <person name="Wittinghofer A."/>
        </authorList>
    </citation>
    <scope>X-RAY CRYSTALLOGRAPHY (1.9 ANGSTROMS) OF 17-177 IN COMPLEX WITH HUMAN RP2 AND GTP</scope>
    <scope>FUNCTION</scope>
    <scope>INTERACTION WITH HUMAN RP2</scope>
    <scope>MUTAGENESIS OF GLN-49; GLN-71; LYS-98; GLU-164 AND ASP-168</scope>
</reference>
<organism>
    <name type="scientific">Mus musculus</name>
    <name type="common">Mouse</name>
    <dbReference type="NCBI Taxonomy" id="10090"/>
    <lineage>
        <taxon>Eukaryota</taxon>
        <taxon>Metazoa</taxon>
        <taxon>Chordata</taxon>
        <taxon>Craniata</taxon>
        <taxon>Vertebrata</taxon>
        <taxon>Euteleostomi</taxon>
        <taxon>Mammalia</taxon>
        <taxon>Eutheria</taxon>
        <taxon>Euarchontoglires</taxon>
        <taxon>Glires</taxon>
        <taxon>Rodentia</taxon>
        <taxon>Myomorpha</taxon>
        <taxon>Muroidea</taxon>
        <taxon>Muridae</taxon>
        <taxon>Murinae</taxon>
        <taxon>Mus</taxon>
        <taxon>Mus</taxon>
    </lineage>
</organism>
<comment type="function">
    <text evidence="2 5 7 8">Small GTP-binding protein which cycles between an inactive GDP-bound and an active GTP-bound form, and the rate of cycling is regulated by guanine nucleotide exchange factors (GEF) and GTPase-activating proteins (GAP) (PubMed:18376416). Required for normal cytokinesis and cilia signaling. Required for targeting proteins to the cilium, including myristoylated NPHP3 and prenylated INPP5E. Targets NPHP3 to the ciliary membrane by releasing myristoylated NPHP3 from UNC119B cargo adapter into the cilium (By similarity). Requires assistance from GTPase-activating proteins (GAPs) like RP2 and PDE6D, in order to cycle between inactive GDP-bound and active GTP-bound forms (PubMed:15979089). Required for PKD1:PKD2 complex targeting from the trans-Golgi network to the cilium (PubMed:25405894).</text>
</comment>
<comment type="subunit">
    <text evidence="2 4 5 7 8">Found in a complex with ARL3, RP2 and UNC119 (or UNC119B); RP2 induces hydrolysis of GTP ARL3 in the complex, leading to the release of UNC119 (or UNC119B). Interacts with RP2; interaction is direct and stimulated with the activated GTP-bound form of ARL3. Interacts with SYS1. Interacts with ARL2BP; the GTP-bound form interacts with ARL2BP. Microtubule-associated protein. Does not interact with TBCC (By similarity). Interacts with RP2 (PubMed:18376416). Interacts with PDE6D; the interaction occurs specifically with the GTP-bound form of ARL3 (PubMed:10518933, PubMed:15979089). Interacts with GGA1; the interaction recruits PKD1:PKD2 complex to trans-Golgi network and is required for ciliary targeting of PKD1:PKD2 complex (PubMed:25405894). Interacts with DNAAF9 (By similarity).</text>
</comment>
<comment type="interaction">
    <interactant intactId="EBI-6860857">
        <id>Q9WUL7</id>
    </interactant>
    <interactant intactId="EBI-16180842">
        <id>Q8C6E0</id>
        <label>Cfap36</label>
    </interactant>
    <organismsDiffer>false</organismsDiffer>
    <experiments>5</experiments>
</comment>
<comment type="interaction">
    <interactant intactId="EBI-6860857">
        <id>Q9WUL7</id>
    </interactant>
    <interactant intactId="EBI-2654750">
        <id>Q96G28</id>
        <label>CFAP36</label>
    </interactant>
    <organismsDiffer>true</organismsDiffer>
    <experiments>2</experiments>
</comment>
<comment type="interaction">
    <interactant intactId="EBI-6860857">
        <id>Q9WUL7</id>
    </interactant>
    <interactant intactId="EBI-712685">
        <id>O43924</id>
        <label>PDE6D</label>
    </interactant>
    <organismsDiffer>true</organismsDiffer>
    <experiments>4</experiments>
</comment>
<comment type="interaction">
    <interactant intactId="EBI-6860857">
        <id>Q9WUL7</id>
    </interactant>
    <interactant intactId="EBI-7996807">
        <id>O75695</id>
        <label>RP2</label>
    </interactant>
    <organismsDiffer>true</organismsDiffer>
    <experiments>5</experiments>
</comment>
<comment type="interaction">
    <interactant intactId="EBI-6860857">
        <id>Q9WUL7</id>
    </interactant>
    <interactant intactId="EBI-711260">
        <id>Q13432</id>
        <label>UNC119</label>
    </interactant>
    <organismsDiffer>true</organismsDiffer>
    <experiments>3</experiments>
</comment>
<comment type="subcellular location">
    <subcellularLocation>
        <location>Golgi apparatus membrane</location>
        <topology>Peripheral membrane protein</topology>
        <orientation>Cytoplasmic side</orientation>
    </subcellularLocation>
    <subcellularLocation>
        <location>Cytoplasm</location>
        <location>Cytoskeleton</location>
        <location>Spindle</location>
    </subcellularLocation>
    <subcellularLocation>
        <location>Nucleus</location>
    </subcellularLocation>
    <subcellularLocation>
        <location evidence="1">Cytoplasm</location>
        <location evidence="1">Cytoskeleton</location>
        <location evidence="1">Microtubule organizing center</location>
        <location evidence="1">Centrosome</location>
    </subcellularLocation>
    <subcellularLocation>
        <location evidence="1">Cytoplasm</location>
    </subcellularLocation>
    <subcellularLocation>
        <location evidence="2">Cell projection</location>
        <location evidence="2">Cilium</location>
    </subcellularLocation>
    <text evidence="1">Detected predominantly in the photoreceptor connecting cilium. Centrosome-associated throughout the cell cycle. Not detected to interphase microtubules (By similarity). Present on the mitotic spindle.</text>
</comment>
<comment type="disruption phenotype">
    <text evidence="6">Lethality by 3 weeks of age. Mice exhibit abnormal development of renal, hepatic, and pancreatic epithelial tubule structures. Mice show abnormal epithelial cell proliferation and cyst formation. Moreover, they exhibit photoreceptor degeneration as early as postnatal day 14.</text>
</comment>
<comment type="similarity">
    <text evidence="9">Belongs to the small GTPase superfamily. Arf family.</text>
</comment>
<evidence type="ECO:0000250" key="1"/>
<evidence type="ECO:0000250" key="2">
    <source>
        <dbReference type="UniProtKB" id="P36405"/>
    </source>
</evidence>
<evidence type="ECO:0000255" key="3"/>
<evidence type="ECO:0000269" key="4">
    <source>
    </source>
</evidence>
<evidence type="ECO:0000269" key="5">
    <source>
    </source>
</evidence>
<evidence type="ECO:0000269" key="6">
    <source>
    </source>
</evidence>
<evidence type="ECO:0000269" key="7">
    <source>
    </source>
</evidence>
<evidence type="ECO:0000269" key="8">
    <source>
    </source>
</evidence>
<evidence type="ECO:0000305" key="9"/>
<evidence type="ECO:0000312" key="10">
    <source>
        <dbReference type="MGI" id="MGI:1929699"/>
    </source>
</evidence>
<evidence type="ECO:0007829" key="11">
    <source>
        <dbReference type="PDB" id="1FZQ"/>
    </source>
</evidence>
<evidence type="ECO:0007829" key="12">
    <source>
        <dbReference type="PDB" id="3BH6"/>
    </source>
</evidence>
<evidence type="ECO:0007829" key="13">
    <source>
        <dbReference type="PDB" id="4ZI2"/>
    </source>
</evidence>
<evidence type="ECO:0007829" key="14">
    <source>
        <dbReference type="PDB" id="4ZI3"/>
    </source>
</evidence>
<name>ARL3_MOUSE</name>
<keyword id="KW-0002">3D-structure</keyword>
<keyword id="KW-0131">Cell cycle</keyword>
<keyword id="KW-0132">Cell division</keyword>
<keyword id="KW-0966">Cell projection</keyword>
<keyword id="KW-0963">Cytoplasm</keyword>
<keyword id="KW-0206">Cytoskeleton</keyword>
<keyword id="KW-0333">Golgi apparatus</keyword>
<keyword id="KW-0342">GTP-binding</keyword>
<keyword id="KW-0449">Lipoprotein</keyword>
<keyword id="KW-0460">Magnesium</keyword>
<keyword id="KW-0472">Membrane</keyword>
<keyword id="KW-0479">Metal-binding</keyword>
<keyword id="KW-0519">Myristate</keyword>
<keyword id="KW-0547">Nucleotide-binding</keyword>
<keyword id="KW-0539">Nucleus</keyword>
<keyword id="KW-0597">Phosphoprotein</keyword>
<keyword id="KW-0653">Protein transport</keyword>
<keyword id="KW-1185">Reference proteome</keyword>
<keyword id="KW-0813">Transport</keyword>
<sequence length="182" mass="20487">MGLLSILRKLKSAPDQEVRILLLGLDNAGKTTLLKQLASEDISHITPTQGFNIKSVQSQGFKLNVWDIGGQRKIRPYWRSYFENTDILIYVIDSADRKRFEETGQELTELLEEEKLSCVPVLIFANKQDLLTAAPASEIAEGLNLHTIRDRVWQIQSCSALTGEGVQDGMNWVCKNVNAKKK</sequence>
<dbReference type="EMBL" id="AF143241">
    <property type="protein sequence ID" value="AAD33067.1"/>
    <property type="molecule type" value="mRNA"/>
</dbReference>
<dbReference type="EMBL" id="BC042941">
    <property type="protein sequence ID" value="AAH42941.1"/>
    <property type="molecule type" value="mRNA"/>
</dbReference>
<dbReference type="CCDS" id="CCDS38010.1"/>
<dbReference type="RefSeq" id="NP_062692.1">
    <property type="nucleotide sequence ID" value="NM_019718.3"/>
</dbReference>
<dbReference type="PDB" id="1FZQ">
    <property type="method" value="X-ray"/>
    <property type="resolution" value="1.70 A"/>
    <property type="chains" value="A=2-182"/>
</dbReference>
<dbReference type="PDB" id="3BH6">
    <property type="method" value="X-ray"/>
    <property type="resolution" value="2.60 A"/>
    <property type="chains" value="A=17-177"/>
</dbReference>
<dbReference type="PDB" id="3BH7">
    <property type="method" value="X-ray"/>
    <property type="resolution" value="1.90 A"/>
    <property type="chains" value="A=17-177"/>
</dbReference>
<dbReference type="PDB" id="4GOJ">
    <property type="method" value="X-ray"/>
    <property type="resolution" value="2.10 A"/>
    <property type="chains" value="A/B=1-182"/>
</dbReference>
<dbReference type="PDB" id="4ZI2">
    <property type="method" value="X-ray"/>
    <property type="resolution" value="2.20 A"/>
    <property type="chains" value="A/B=1-182"/>
</dbReference>
<dbReference type="PDB" id="4ZI3">
    <property type="method" value="X-ray"/>
    <property type="resolution" value="2.00 A"/>
    <property type="chains" value="A/B=1-182"/>
</dbReference>
<dbReference type="PDB" id="7OK7">
    <property type="method" value="X-ray"/>
    <property type="resolution" value="3.15 A"/>
    <property type="chains" value="A/B/C/D/E/F=3-182"/>
</dbReference>
<dbReference type="PDBsum" id="1FZQ"/>
<dbReference type="PDBsum" id="3BH6"/>
<dbReference type="PDBsum" id="3BH7"/>
<dbReference type="PDBsum" id="4GOJ"/>
<dbReference type="PDBsum" id="4ZI2"/>
<dbReference type="PDBsum" id="4ZI3"/>
<dbReference type="PDBsum" id="7OK7"/>
<dbReference type="SMR" id="Q9WUL7"/>
<dbReference type="BioGRID" id="207916">
    <property type="interactions" value="5"/>
</dbReference>
<dbReference type="CORUM" id="Q9WUL7"/>
<dbReference type="DIP" id="DIP-29025N"/>
<dbReference type="FunCoup" id="Q9WUL7">
    <property type="interactions" value="797"/>
</dbReference>
<dbReference type="IntAct" id="Q9WUL7">
    <property type="interactions" value="8"/>
</dbReference>
<dbReference type="MINT" id="Q9WUL7"/>
<dbReference type="STRING" id="10090.ENSMUSP00000026009"/>
<dbReference type="GlyGen" id="Q9WUL7">
    <property type="glycosylation" value="2 sites, 1 O-linked glycan (1 site)"/>
</dbReference>
<dbReference type="iPTMnet" id="Q9WUL7"/>
<dbReference type="PhosphoSitePlus" id="Q9WUL7"/>
<dbReference type="SwissPalm" id="Q9WUL7"/>
<dbReference type="REPRODUCTION-2DPAGE" id="IPI00124787"/>
<dbReference type="REPRODUCTION-2DPAGE" id="Q9WUL7"/>
<dbReference type="jPOST" id="Q9WUL7"/>
<dbReference type="PaxDb" id="10090-ENSMUSP00000026009"/>
<dbReference type="ProteomicsDB" id="274970"/>
<dbReference type="Pumba" id="Q9WUL7"/>
<dbReference type="Antibodypedia" id="31479">
    <property type="antibodies" value="433 antibodies from 29 providers"/>
</dbReference>
<dbReference type="DNASU" id="56350"/>
<dbReference type="Ensembl" id="ENSMUST00000026009.10">
    <property type="protein sequence ID" value="ENSMUSP00000026009.9"/>
    <property type="gene ID" value="ENSMUSG00000025035.10"/>
</dbReference>
<dbReference type="GeneID" id="56350"/>
<dbReference type="KEGG" id="mmu:56350"/>
<dbReference type="UCSC" id="uc008htt.1">
    <property type="organism name" value="mouse"/>
</dbReference>
<dbReference type="AGR" id="MGI:1929699"/>
<dbReference type="CTD" id="403"/>
<dbReference type="MGI" id="MGI:1929699">
    <property type="gene designation" value="Arl3"/>
</dbReference>
<dbReference type="VEuPathDB" id="HostDB:ENSMUSG00000025035"/>
<dbReference type="eggNOG" id="KOG0074">
    <property type="taxonomic scope" value="Eukaryota"/>
</dbReference>
<dbReference type="GeneTree" id="ENSGT00940000155737"/>
<dbReference type="HOGENOM" id="CLU_040729_12_0_1"/>
<dbReference type="InParanoid" id="Q9WUL7"/>
<dbReference type="OMA" id="EGMEWVC"/>
<dbReference type="OrthoDB" id="2011769at2759"/>
<dbReference type="PhylomeDB" id="Q9WUL7"/>
<dbReference type="TreeFam" id="TF105463"/>
<dbReference type="Reactome" id="R-MMU-5624138">
    <property type="pathway name" value="Trafficking of myristoylated proteins to the cilium"/>
</dbReference>
<dbReference type="BioGRID-ORCS" id="56350">
    <property type="hits" value="3 hits in 77 CRISPR screens"/>
</dbReference>
<dbReference type="ChiTaRS" id="Arl3">
    <property type="organism name" value="mouse"/>
</dbReference>
<dbReference type="EvolutionaryTrace" id="Q9WUL7"/>
<dbReference type="PRO" id="PR:Q9WUL7"/>
<dbReference type="Proteomes" id="UP000000589">
    <property type="component" value="Chromosome 19"/>
</dbReference>
<dbReference type="RNAct" id="Q9WUL7">
    <property type="molecule type" value="protein"/>
</dbReference>
<dbReference type="Bgee" id="ENSMUSG00000025035">
    <property type="expression patterns" value="Expressed in retinal neural layer and 265 other cell types or tissues"/>
</dbReference>
<dbReference type="ExpressionAtlas" id="Q9WUL7">
    <property type="expression patterns" value="baseline and differential"/>
</dbReference>
<dbReference type="GO" id="GO:0005930">
    <property type="term" value="C:axoneme"/>
    <property type="evidence" value="ECO:0000314"/>
    <property type="project" value="UniProtKB"/>
</dbReference>
<dbReference type="GO" id="GO:0005813">
    <property type="term" value="C:centrosome"/>
    <property type="evidence" value="ECO:0000250"/>
    <property type="project" value="UniProtKB"/>
</dbReference>
<dbReference type="GO" id="GO:0036064">
    <property type="term" value="C:ciliary basal body"/>
    <property type="evidence" value="ECO:0000314"/>
    <property type="project" value="UniProtKB"/>
</dbReference>
<dbReference type="GO" id="GO:0035869">
    <property type="term" value="C:ciliary transition zone"/>
    <property type="evidence" value="ECO:0000314"/>
    <property type="project" value="UniProtKB"/>
</dbReference>
<dbReference type="GO" id="GO:0005929">
    <property type="term" value="C:cilium"/>
    <property type="evidence" value="ECO:0000250"/>
    <property type="project" value="UniProtKB"/>
</dbReference>
<dbReference type="GO" id="GO:0005881">
    <property type="term" value="C:cytoplasmic microtubule"/>
    <property type="evidence" value="ECO:0000250"/>
    <property type="project" value="UniProtKB"/>
</dbReference>
<dbReference type="GO" id="GO:0005794">
    <property type="term" value="C:Golgi apparatus"/>
    <property type="evidence" value="ECO:0000250"/>
    <property type="project" value="UniProtKB"/>
</dbReference>
<dbReference type="GO" id="GO:0000139">
    <property type="term" value="C:Golgi membrane"/>
    <property type="evidence" value="ECO:0007669"/>
    <property type="project" value="UniProtKB-SubCell"/>
</dbReference>
<dbReference type="GO" id="GO:0030496">
    <property type="term" value="C:midbody"/>
    <property type="evidence" value="ECO:0000250"/>
    <property type="project" value="UniProtKB"/>
</dbReference>
<dbReference type="GO" id="GO:0005654">
    <property type="term" value="C:nucleoplasm"/>
    <property type="evidence" value="ECO:0007669"/>
    <property type="project" value="Ensembl"/>
</dbReference>
<dbReference type="GO" id="GO:0005634">
    <property type="term" value="C:nucleus"/>
    <property type="evidence" value="ECO:0000250"/>
    <property type="project" value="UniProtKB"/>
</dbReference>
<dbReference type="GO" id="GO:0032391">
    <property type="term" value="C:photoreceptor connecting cilium"/>
    <property type="evidence" value="ECO:0000250"/>
    <property type="project" value="UniProtKB"/>
</dbReference>
<dbReference type="GO" id="GO:0005876">
    <property type="term" value="C:spindle microtubule"/>
    <property type="evidence" value="ECO:0000250"/>
    <property type="project" value="UniProtKB"/>
</dbReference>
<dbReference type="GO" id="GO:0019003">
    <property type="term" value="F:GDP binding"/>
    <property type="evidence" value="ECO:0000314"/>
    <property type="project" value="UniProtKB"/>
</dbReference>
<dbReference type="GO" id="GO:0005525">
    <property type="term" value="F:GTP binding"/>
    <property type="evidence" value="ECO:0000314"/>
    <property type="project" value="UniProtKB"/>
</dbReference>
<dbReference type="GO" id="GO:0003924">
    <property type="term" value="F:GTPase activity"/>
    <property type="evidence" value="ECO:0000314"/>
    <property type="project" value="UniProtKB"/>
</dbReference>
<dbReference type="GO" id="GO:0000287">
    <property type="term" value="F:magnesium ion binding"/>
    <property type="evidence" value="ECO:0000314"/>
    <property type="project" value="UniProtKB"/>
</dbReference>
<dbReference type="GO" id="GO:0008017">
    <property type="term" value="F:microtubule binding"/>
    <property type="evidence" value="ECO:0000250"/>
    <property type="project" value="UniProtKB"/>
</dbReference>
<dbReference type="GO" id="GO:0060271">
    <property type="term" value="P:cilium assembly"/>
    <property type="evidence" value="ECO:0000250"/>
    <property type="project" value="UniProtKB"/>
</dbReference>
<dbReference type="GO" id="GO:0006893">
    <property type="term" value="P:Golgi to plasma membrane transport"/>
    <property type="evidence" value="ECO:0000315"/>
    <property type="project" value="UniProtKB"/>
</dbReference>
<dbReference type="GO" id="GO:0042073">
    <property type="term" value="P:intraciliary transport"/>
    <property type="evidence" value="ECO:0000315"/>
    <property type="project" value="MGI"/>
</dbReference>
<dbReference type="GO" id="GO:0001822">
    <property type="term" value="P:kidney development"/>
    <property type="evidence" value="ECO:0000315"/>
    <property type="project" value="UniProtKB"/>
</dbReference>
<dbReference type="GO" id="GO:0000281">
    <property type="term" value="P:mitotic cytokinesis"/>
    <property type="evidence" value="ECO:0000250"/>
    <property type="project" value="UniProtKB"/>
</dbReference>
<dbReference type="GO" id="GO:0042461">
    <property type="term" value="P:photoreceptor cell development"/>
    <property type="evidence" value="ECO:0000315"/>
    <property type="project" value="UniProtKB"/>
</dbReference>
<dbReference type="GO" id="GO:0006892">
    <property type="term" value="P:post-Golgi vesicle-mediated transport"/>
    <property type="evidence" value="ECO:0000266"/>
    <property type="project" value="MGI"/>
</dbReference>
<dbReference type="GO" id="GO:1903441">
    <property type="term" value="P:protein localization to ciliary membrane"/>
    <property type="evidence" value="ECO:0000315"/>
    <property type="project" value="UniProtKB"/>
</dbReference>
<dbReference type="GO" id="GO:0015031">
    <property type="term" value="P:protein transport"/>
    <property type="evidence" value="ECO:0007669"/>
    <property type="project" value="UniProtKB-KW"/>
</dbReference>
<dbReference type="GO" id="GO:0007264">
    <property type="term" value="P:small GTPase-mediated signal transduction"/>
    <property type="evidence" value="ECO:0000250"/>
    <property type="project" value="UniProtKB"/>
</dbReference>
<dbReference type="GO" id="GO:0007224">
    <property type="term" value="P:smoothened signaling pathway"/>
    <property type="evidence" value="ECO:0000315"/>
    <property type="project" value="MGI"/>
</dbReference>
<dbReference type="CDD" id="cd04155">
    <property type="entry name" value="Arl3"/>
    <property type="match status" value="1"/>
</dbReference>
<dbReference type="FunFam" id="3.40.50.300:FF:000281">
    <property type="entry name" value="ADP-ribosylation factor-like protein 3"/>
    <property type="match status" value="1"/>
</dbReference>
<dbReference type="Gene3D" id="3.40.50.300">
    <property type="entry name" value="P-loop containing nucleotide triphosphate hydrolases"/>
    <property type="match status" value="1"/>
</dbReference>
<dbReference type="InterPro" id="IPR044612">
    <property type="entry name" value="ARL2/3"/>
</dbReference>
<dbReference type="InterPro" id="IPR027417">
    <property type="entry name" value="P-loop_NTPase"/>
</dbReference>
<dbReference type="InterPro" id="IPR005225">
    <property type="entry name" value="Small_GTP-bd"/>
</dbReference>
<dbReference type="InterPro" id="IPR006689">
    <property type="entry name" value="Small_GTPase_ARF/SAR"/>
</dbReference>
<dbReference type="NCBIfam" id="TIGR00231">
    <property type="entry name" value="small_GTP"/>
    <property type="match status" value="1"/>
</dbReference>
<dbReference type="PANTHER" id="PTHR45697">
    <property type="entry name" value="ADP-RIBOSYLATION FACTOR-LIKE PROTEIN 2-RELATED"/>
    <property type="match status" value="1"/>
</dbReference>
<dbReference type="Pfam" id="PF00025">
    <property type="entry name" value="Arf"/>
    <property type="match status" value="1"/>
</dbReference>
<dbReference type="PRINTS" id="PR00328">
    <property type="entry name" value="SAR1GTPBP"/>
</dbReference>
<dbReference type="SMART" id="SM00177">
    <property type="entry name" value="ARF"/>
    <property type="match status" value="1"/>
</dbReference>
<dbReference type="SMART" id="SM00175">
    <property type="entry name" value="RAB"/>
    <property type="match status" value="1"/>
</dbReference>
<dbReference type="SMART" id="SM00178">
    <property type="entry name" value="SAR"/>
    <property type="match status" value="1"/>
</dbReference>
<dbReference type="SUPFAM" id="SSF52540">
    <property type="entry name" value="P-loop containing nucleoside triphosphate hydrolases"/>
    <property type="match status" value="1"/>
</dbReference>
<dbReference type="PROSITE" id="PS51417">
    <property type="entry name" value="ARF"/>
    <property type="match status" value="1"/>
</dbReference>